<name>PDRP_PELPD</name>
<evidence type="ECO:0000255" key="1">
    <source>
        <dbReference type="HAMAP-Rule" id="MF_00921"/>
    </source>
</evidence>
<dbReference type="EC" id="2.7.11.32" evidence="1"/>
<dbReference type="EC" id="2.7.4.27" evidence="1"/>
<dbReference type="EMBL" id="CP000482">
    <property type="protein sequence ID" value="ABL00556.1"/>
    <property type="molecule type" value="Genomic_DNA"/>
</dbReference>
<dbReference type="RefSeq" id="WP_011736791.1">
    <property type="nucleotide sequence ID" value="NC_008609.1"/>
</dbReference>
<dbReference type="SMR" id="A1AT85"/>
<dbReference type="STRING" id="338966.Ppro_2958"/>
<dbReference type="KEGG" id="ppd:Ppro_2958"/>
<dbReference type="eggNOG" id="COG1806">
    <property type="taxonomic scope" value="Bacteria"/>
</dbReference>
<dbReference type="HOGENOM" id="CLU_046206_2_1_7"/>
<dbReference type="OrthoDB" id="9782201at2"/>
<dbReference type="Proteomes" id="UP000006732">
    <property type="component" value="Chromosome"/>
</dbReference>
<dbReference type="GO" id="GO:0043531">
    <property type="term" value="F:ADP binding"/>
    <property type="evidence" value="ECO:0007669"/>
    <property type="project" value="UniProtKB-UniRule"/>
</dbReference>
<dbReference type="GO" id="GO:0005524">
    <property type="term" value="F:ATP binding"/>
    <property type="evidence" value="ECO:0007669"/>
    <property type="project" value="InterPro"/>
</dbReference>
<dbReference type="GO" id="GO:0016776">
    <property type="term" value="F:phosphotransferase activity, phosphate group as acceptor"/>
    <property type="evidence" value="ECO:0007669"/>
    <property type="project" value="UniProtKB-UniRule"/>
</dbReference>
<dbReference type="GO" id="GO:0004674">
    <property type="term" value="F:protein serine/threonine kinase activity"/>
    <property type="evidence" value="ECO:0007669"/>
    <property type="project" value="UniProtKB-UniRule"/>
</dbReference>
<dbReference type="HAMAP" id="MF_00921">
    <property type="entry name" value="PDRP"/>
    <property type="match status" value="1"/>
</dbReference>
<dbReference type="InterPro" id="IPR005177">
    <property type="entry name" value="Kinase-pyrophosphorylase"/>
</dbReference>
<dbReference type="InterPro" id="IPR026565">
    <property type="entry name" value="PPDK_reg"/>
</dbReference>
<dbReference type="NCBIfam" id="NF003742">
    <property type="entry name" value="PRK05339.1"/>
    <property type="match status" value="1"/>
</dbReference>
<dbReference type="PANTHER" id="PTHR31756">
    <property type="entry name" value="PYRUVATE, PHOSPHATE DIKINASE REGULATORY PROTEIN 1, CHLOROPLASTIC"/>
    <property type="match status" value="1"/>
</dbReference>
<dbReference type="PANTHER" id="PTHR31756:SF3">
    <property type="entry name" value="PYRUVATE, PHOSPHATE DIKINASE REGULATORY PROTEIN 1, CHLOROPLASTIC"/>
    <property type="match status" value="1"/>
</dbReference>
<dbReference type="Pfam" id="PF03618">
    <property type="entry name" value="Kinase-PPPase"/>
    <property type="match status" value="1"/>
</dbReference>
<proteinExistence type="inferred from homology"/>
<feature type="chain" id="PRO_0000316711" description="Putative pyruvate, phosphate dikinase regulatory protein">
    <location>
        <begin position="1"/>
        <end position="280"/>
    </location>
</feature>
<feature type="binding site" evidence="1">
    <location>
        <begin position="147"/>
        <end position="154"/>
    </location>
    <ligand>
        <name>ADP</name>
        <dbReference type="ChEBI" id="CHEBI:456216"/>
    </ligand>
</feature>
<reference key="1">
    <citation type="submission" date="2006-10" db="EMBL/GenBank/DDBJ databases">
        <title>Complete sequence of chromosome of Pelobacter propionicus DSM 2379.</title>
        <authorList>
            <consortium name="US DOE Joint Genome Institute"/>
            <person name="Copeland A."/>
            <person name="Lucas S."/>
            <person name="Lapidus A."/>
            <person name="Barry K."/>
            <person name="Detter J.C."/>
            <person name="Glavina del Rio T."/>
            <person name="Hammon N."/>
            <person name="Israni S."/>
            <person name="Dalin E."/>
            <person name="Tice H."/>
            <person name="Pitluck S."/>
            <person name="Saunders E."/>
            <person name="Brettin T."/>
            <person name="Bruce D."/>
            <person name="Han C."/>
            <person name="Tapia R."/>
            <person name="Schmutz J."/>
            <person name="Larimer F."/>
            <person name="Land M."/>
            <person name="Hauser L."/>
            <person name="Kyrpides N."/>
            <person name="Kim E."/>
            <person name="Lovley D."/>
            <person name="Richardson P."/>
        </authorList>
    </citation>
    <scope>NUCLEOTIDE SEQUENCE [LARGE SCALE GENOMIC DNA]</scope>
    <source>
        <strain>DSM 2379 / NBRC 103807 / OttBd1</strain>
    </source>
</reference>
<comment type="function">
    <text evidence="1">Bifunctional serine/threonine kinase and phosphorylase involved in the regulation of the pyruvate, phosphate dikinase (PPDK) by catalyzing its phosphorylation/dephosphorylation.</text>
</comment>
<comment type="catalytic activity">
    <reaction evidence="1">
        <text>N(tele)-phospho-L-histidyl/L-threonyl-[pyruvate, phosphate dikinase] + ADP = N(tele)-phospho-L-histidyl/O-phospho-L-threonyl-[pyruvate, phosphate dikinase] + AMP + H(+)</text>
        <dbReference type="Rhea" id="RHEA:43692"/>
        <dbReference type="Rhea" id="RHEA-COMP:10650"/>
        <dbReference type="Rhea" id="RHEA-COMP:10651"/>
        <dbReference type="ChEBI" id="CHEBI:15378"/>
        <dbReference type="ChEBI" id="CHEBI:30013"/>
        <dbReference type="ChEBI" id="CHEBI:61977"/>
        <dbReference type="ChEBI" id="CHEBI:83586"/>
        <dbReference type="ChEBI" id="CHEBI:456215"/>
        <dbReference type="ChEBI" id="CHEBI:456216"/>
        <dbReference type="EC" id="2.7.11.32"/>
    </reaction>
</comment>
<comment type="catalytic activity">
    <reaction evidence="1">
        <text>N(tele)-phospho-L-histidyl/O-phospho-L-threonyl-[pyruvate, phosphate dikinase] + phosphate + H(+) = N(tele)-phospho-L-histidyl/L-threonyl-[pyruvate, phosphate dikinase] + diphosphate</text>
        <dbReference type="Rhea" id="RHEA:43696"/>
        <dbReference type="Rhea" id="RHEA-COMP:10650"/>
        <dbReference type="Rhea" id="RHEA-COMP:10651"/>
        <dbReference type="ChEBI" id="CHEBI:15378"/>
        <dbReference type="ChEBI" id="CHEBI:30013"/>
        <dbReference type="ChEBI" id="CHEBI:33019"/>
        <dbReference type="ChEBI" id="CHEBI:43474"/>
        <dbReference type="ChEBI" id="CHEBI:61977"/>
        <dbReference type="ChEBI" id="CHEBI:83586"/>
        <dbReference type="EC" id="2.7.4.27"/>
    </reaction>
</comment>
<comment type="similarity">
    <text evidence="1">Belongs to the pyruvate, phosphate/water dikinase regulatory protein family. PDRP subfamily.</text>
</comment>
<gene>
    <name type="ordered locus">Ppro_2958</name>
</gene>
<organism>
    <name type="scientific">Pelobacter propionicus (strain DSM 2379 / NBRC 103807 / OttBd1)</name>
    <dbReference type="NCBI Taxonomy" id="338966"/>
    <lineage>
        <taxon>Bacteria</taxon>
        <taxon>Pseudomonadati</taxon>
        <taxon>Thermodesulfobacteriota</taxon>
        <taxon>Desulfuromonadia</taxon>
        <taxon>Desulfuromonadales</taxon>
        <taxon>Desulfuromonadaceae</taxon>
        <taxon>Pelobacter</taxon>
    </lineage>
</organism>
<protein>
    <recommendedName>
        <fullName evidence="1">Putative pyruvate, phosphate dikinase regulatory protein</fullName>
        <shortName evidence="1">PPDK regulatory protein</shortName>
        <ecNumber evidence="1">2.7.11.32</ecNumber>
        <ecNumber evidence="1">2.7.4.27</ecNumber>
    </recommendedName>
</protein>
<keyword id="KW-0418">Kinase</keyword>
<keyword id="KW-0547">Nucleotide-binding</keyword>
<keyword id="KW-1185">Reference proteome</keyword>
<keyword id="KW-0723">Serine/threonine-protein kinase</keyword>
<keyword id="KW-0808">Transferase</keyword>
<sequence>MKRIYVISDATGETAERVIRAALSQFYYDEVRVVRLCQIHNENDVQQAMSVAIAEPGMIAYTLVDPSLSQKVAQLAEDHGMYAVDLLGGLIYSLSCFLGATSQAKPGLLHRIDTDYFKRMEAVNFTVTHDDGQDTQYLHKADLVLVGASRSSKTPLSMYLAHKGYKVANVPLIIGIDPPVELFQIEQEKVVGLVIDPKRLVEIRTSRLINMRQSPRGNYADYQRVEDEITSCRRLYRQHPQWMVIDMTNKSVEEAASEILRKMAVREKRITEARVKGDIS</sequence>
<accession>A1AT85</accession>